<comment type="catalytic activity">
    <reaction evidence="1">
        <text>L-methionyl-[protein] + [thioredoxin]-disulfide + H2O = L-methionyl-(R)-S-oxide-[protein] + [thioredoxin]-dithiol</text>
        <dbReference type="Rhea" id="RHEA:24164"/>
        <dbReference type="Rhea" id="RHEA-COMP:10698"/>
        <dbReference type="Rhea" id="RHEA-COMP:10700"/>
        <dbReference type="Rhea" id="RHEA-COMP:12313"/>
        <dbReference type="Rhea" id="RHEA-COMP:12314"/>
        <dbReference type="ChEBI" id="CHEBI:15377"/>
        <dbReference type="ChEBI" id="CHEBI:16044"/>
        <dbReference type="ChEBI" id="CHEBI:29950"/>
        <dbReference type="ChEBI" id="CHEBI:45764"/>
        <dbReference type="ChEBI" id="CHEBI:50058"/>
        <dbReference type="EC" id="1.8.4.12"/>
    </reaction>
</comment>
<comment type="cofactor">
    <cofactor evidence="1">
        <name>Zn(2+)</name>
        <dbReference type="ChEBI" id="CHEBI:29105"/>
    </cofactor>
    <text evidence="1">Binds 1 zinc ion per subunit. The zinc ion is important for the structural integrity of the protein.</text>
</comment>
<comment type="similarity">
    <text evidence="1">Belongs to the MsrB Met sulfoxide reductase family.</text>
</comment>
<name>MSRB_PASMU</name>
<evidence type="ECO:0000255" key="1">
    <source>
        <dbReference type="HAMAP-Rule" id="MF_01400"/>
    </source>
</evidence>
<evidence type="ECO:0000255" key="2">
    <source>
        <dbReference type="PROSITE-ProRule" id="PRU01126"/>
    </source>
</evidence>
<keyword id="KW-0479">Metal-binding</keyword>
<keyword id="KW-0560">Oxidoreductase</keyword>
<keyword id="KW-1185">Reference proteome</keyword>
<keyword id="KW-0862">Zinc</keyword>
<reference key="1">
    <citation type="journal article" date="2001" name="Proc. Natl. Acad. Sci. U.S.A.">
        <title>Complete genomic sequence of Pasteurella multocida Pm70.</title>
        <authorList>
            <person name="May B.J."/>
            <person name="Zhang Q."/>
            <person name="Li L.L."/>
            <person name="Paustian M.L."/>
            <person name="Whittam T.S."/>
            <person name="Kapur V."/>
        </authorList>
    </citation>
    <scope>NUCLEOTIDE SEQUENCE [LARGE SCALE GENOMIC DNA]</scope>
    <source>
        <strain>Pm70</strain>
    </source>
</reference>
<protein>
    <recommendedName>
        <fullName evidence="1">Peptide methionine sulfoxide reductase MsrB</fullName>
        <ecNumber evidence="1">1.8.4.12</ecNumber>
    </recommendedName>
    <alternativeName>
        <fullName evidence="1">Peptide-methionine (R)-S-oxide reductase</fullName>
    </alternativeName>
</protein>
<accession>Q9CMB1</accession>
<organism>
    <name type="scientific">Pasteurella multocida (strain Pm70)</name>
    <dbReference type="NCBI Taxonomy" id="272843"/>
    <lineage>
        <taxon>Bacteria</taxon>
        <taxon>Pseudomonadati</taxon>
        <taxon>Pseudomonadota</taxon>
        <taxon>Gammaproteobacteria</taxon>
        <taxon>Pasteurellales</taxon>
        <taxon>Pasteurellaceae</taxon>
        <taxon>Pasteurella</taxon>
    </lineage>
</organism>
<sequence length="130" mass="14675">MKKREDMTEMQVHVCLNQGTEYPFTGKLLDQQKKGLYRCVVCHSPLFVSDTKFDAGCGWPSFFQAISPEAIRYLDDYTLSRPRTEIRCGQCDAHLGHVFEDGPPPTGLRYCVNSVSMAFEDSETGELIEG</sequence>
<feature type="chain" id="PRO_0000140285" description="Peptide methionine sulfoxide reductase MsrB">
    <location>
        <begin position="1"/>
        <end position="130"/>
    </location>
</feature>
<feature type="domain" description="MsrB" evidence="2">
    <location>
        <begin position="1"/>
        <end position="122"/>
    </location>
</feature>
<feature type="active site" description="Nucleophile" evidence="2">
    <location>
        <position position="111"/>
    </location>
</feature>
<feature type="binding site" evidence="2">
    <location>
        <position position="39"/>
    </location>
    <ligand>
        <name>Zn(2+)</name>
        <dbReference type="ChEBI" id="CHEBI:29105"/>
    </ligand>
</feature>
<feature type="binding site" evidence="2">
    <location>
        <position position="42"/>
    </location>
    <ligand>
        <name>Zn(2+)</name>
        <dbReference type="ChEBI" id="CHEBI:29105"/>
    </ligand>
</feature>
<feature type="binding site" evidence="2">
    <location>
        <position position="88"/>
    </location>
    <ligand>
        <name>Zn(2+)</name>
        <dbReference type="ChEBI" id="CHEBI:29105"/>
    </ligand>
</feature>
<feature type="binding site" evidence="2">
    <location>
        <position position="91"/>
    </location>
    <ligand>
        <name>Zn(2+)</name>
        <dbReference type="ChEBI" id="CHEBI:29105"/>
    </ligand>
</feature>
<proteinExistence type="inferred from homology"/>
<gene>
    <name evidence="1" type="primary">msrB</name>
    <name type="ordered locus">PM0923</name>
</gene>
<dbReference type="EC" id="1.8.4.12" evidence="1"/>
<dbReference type="EMBL" id="AE004439">
    <property type="protein sequence ID" value="AAK03007.1"/>
    <property type="molecule type" value="Genomic_DNA"/>
</dbReference>
<dbReference type="RefSeq" id="WP_005717033.1">
    <property type="nucleotide sequence ID" value="NC_002663.1"/>
</dbReference>
<dbReference type="SMR" id="Q9CMB1"/>
<dbReference type="STRING" id="272843.PM0923"/>
<dbReference type="EnsemblBacteria" id="AAK03007">
    <property type="protein sequence ID" value="AAK03007"/>
    <property type="gene ID" value="PM0923"/>
</dbReference>
<dbReference type="GeneID" id="77206226"/>
<dbReference type="KEGG" id="pmu:PM0923"/>
<dbReference type="HOGENOM" id="CLU_031040_8_5_6"/>
<dbReference type="OrthoDB" id="9785497at2"/>
<dbReference type="Proteomes" id="UP000000809">
    <property type="component" value="Chromosome"/>
</dbReference>
<dbReference type="GO" id="GO:0005737">
    <property type="term" value="C:cytoplasm"/>
    <property type="evidence" value="ECO:0007669"/>
    <property type="project" value="TreeGrafter"/>
</dbReference>
<dbReference type="GO" id="GO:0033743">
    <property type="term" value="F:peptide-methionine (R)-S-oxide reductase activity"/>
    <property type="evidence" value="ECO:0007669"/>
    <property type="project" value="UniProtKB-UniRule"/>
</dbReference>
<dbReference type="GO" id="GO:0008270">
    <property type="term" value="F:zinc ion binding"/>
    <property type="evidence" value="ECO:0007669"/>
    <property type="project" value="UniProtKB-UniRule"/>
</dbReference>
<dbReference type="GO" id="GO:0030091">
    <property type="term" value="P:protein repair"/>
    <property type="evidence" value="ECO:0007669"/>
    <property type="project" value="InterPro"/>
</dbReference>
<dbReference type="GO" id="GO:0006979">
    <property type="term" value="P:response to oxidative stress"/>
    <property type="evidence" value="ECO:0007669"/>
    <property type="project" value="InterPro"/>
</dbReference>
<dbReference type="FunFam" id="2.170.150.20:FF:000001">
    <property type="entry name" value="Peptide methionine sulfoxide reductase MsrB"/>
    <property type="match status" value="1"/>
</dbReference>
<dbReference type="Gene3D" id="2.170.150.20">
    <property type="entry name" value="Peptide methionine sulfoxide reductase"/>
    <property type="match status" value="1"/>
</dbReference>
<dbReference type="HAMAP" id="MF_01400">
    <property type="entry name" value="MsrB"/>
    <property type="match status" value="1"/>
</dbReference>
<dbReference type="InterPro" id="IPR028427">
    <property type="entry name" value="Met_Sox_Rdtase_MsrB"/>
</dbReference>
<dbReference type="InterPro" id="IPR002579">
    <property type="entry name" value="Met_Sox_Rdtase_MsrB_dom"/>
</dbReference>
<dbReference type="InterPro" id="IPR011057">
    <property type="entry name" value="Mss4-like_sf"/>
</dbReference>
<dbReference type="NCBIfam" id="TIGR00357">
    <property type="entry name" value="peptide-methionine (R)-S-oxide reductase MsrB"/>
    <property type="match status" value="1"/>
</dbReference>
<dbReference type="PANTHER" id="PTHR10173">
    <property type="entry name" value="METHIONINE SULFOXIDE REDUCTASE"/>
    <property type="match status" value="1"/>
</dbReference>
<dbReference type="PANTHER" id="PTHR10173:SF52">
    <property type="entry name" value="METHIONINE-R-SULFOXIDE REDUCTASE B1"/>
    <property type="match status" value="1"/>
</dbReference>
<dbReference type="Pfam" id="PF01641">
    <property type="entry name" value="SelR"/>
    <property type="match status" value="1"/>
</dbReference>
<dbReference type="SUPFAM" id="SSF51316">
    <property type="entry name" value="Mss4-like"/>
    <property type="match status" value="1"/>
</dbReference>
<dbReference type="PROSITE" id="PS51790">
    <property type="entry name" value="MSRB"/>
    <property type="match status" value="1"/>
</dbReference>